<keyword id="KW-0963">Cytoplasm</keyword>
<keyword id="KW-0274">FAD</keyword>
<keyword id="KW-0285">Flavoprotein</keyword>
<keyword id="KW-0489">Methyltransferase</keyword>
<keyword id="KW-0520">NAD</keyword>
<keyword id="KW-0521">NADP</keyword>
<keyword id="KW-1185">Reference proteome</keyword>
<keyword id="KW-0808">Transferase</keyword>
<keyword id="KW-0819">tRNA processing</keyword>
<proteinExistence type="inferred from homology"/>
<evidence type="ECO:0000255" key="1">
    <source>
        <dbReference type="HAMAP-Rule" id="MF_01037"/>
    </source>
</evidence>
<evidence type="ECO:0000256" key="2">
    <source>
        <dbReference type="SAM" id="MobiDB-lite"/>
    </source>
</evidence>
<gene>
    <name evidence="1" type="primary">trmFO</name>
    <name type="ordered locus">DVU_2350</name>
</gene>
<accession>Q729K0</accession>
<feature type="chain" id="PRO_0000346336" description="Methylenetetrahydrofolate--tRNA-(uracil-5-)-methyltransferase TrmFO">
    <location>
        <begin position="1"/>
        <end position="474"/>
    </location>
</feature>
<feature type="region of interest" description="Disordered" evidence="2">
    <location>
        <begin position="453"/>
        <end position="474"/>
    </location>
</feature>
<feature type="binding site" evidence="1">
    <location>
        <begin position="15"/>
        <end position="20"/>
    </location>
    <ligand>
        <name>FAD</name>
        <dbReference type="ChEBI" id="CHEBI:57692"/>
    </ligand>
</feature>
<comment type="function">
    <text evidence="1">Catalyzes the folate-dependent formation of 5-methyl-uridine at position 54 (M-5-U54) in all tRNAs.</text>
</comment>
<comment type="catalytic activity">
    <reaction evidence="1">
        <text>uridine(54) in tRNA + (6R)-5,10-methylene-5,6,7,8-tetrahydrofolate + NADH + H(+) = 5-methyluridine(54) in tRNA + (6S)-5,6,7,8-tetrahydrofolate + NAD(+)</text>
        <dbReference type="Rhea" id="RHEA:16873"/>
        <dbReference type="Rhea" id="RHEA-COMP:10167"/>
        <dbReference type="Rhea" id="RHEA-COMP:10193"/>
        <dbReference type="ChEBI" id="CHEBI:15378"/>
        <dbReference type="ChEBI" id="CHEBI:15636"/>
        <dbReference type="ChEBI" id="CHEBI:57453"/>
        <dbReference type="ChEBI" id="CHEBI:57540"/>
        <dbReference type="ChEBI" id="CHEBI:57945"/>
        <dbReference type="ChEBI" id="CHEBI:65315"/>
        <dbReference type="ChEBI" id="CHEBI:74447"/>
        <dbReference type="EC" id="2.1.1.74"/>
    </reaction>
</comment>
<comment type="catalytic activity">
    <reaction evidence="1">
        <text>uridine(54) in tRNA + (6R)-5,10-methylene-5,6,7,8-tetrahydrofolate + NADPH + H(+) = 5-methyluridine(54) in tRNA + (6S)-5,6,7,8-tetrahydrofolate + NADP(+)</text>
        <dbReference type="Rhea" id="RHEA:62372"/>
        <dbReference type="Rhea" id="RHEA-COMP:10167"/>
        <dbReference type="Rhea" id="RHEA-COMP:10193"/>
        <dbReference type="ChEBI" id="CHEBI:15378"/>
        <dbReference type="ChEBI" id="CHEBI:15636"/>
        <dbReference type="ChEBI" id="CHEBI:57453"/>
        <dbReference type="ChEBI" id="CHEBI:57783"/>
        <dbReference type="ChEBI" id="CHEBI:58349"/>
        <dbReference type="ChEBI" id="CHEBI:65315"/>
        <dbReference type="ChEBI" id="CHEBI:74447"/>
        <dbReference type="EC" id="2.1.1.74"/>
    </reaction>
</comment>
<comment type="cofactor">
    <cofactor evidence="1">
        <name>FAD</name>
        <dbReference type="ChEBI" id="CHEBI:57692"/>
    </cofactor>
</comment>
<comment type="subcellular location">
    <subcellularLocation>
        <location evidence="1">Cytoplasm</location>
    </subcellularLocation>
</comment>
<comment type="similarity">
    <text evidence="1">Belongs to the MnmG family. TrmFO subfamily.</text>
</comment>
<dbReference type="EC" id="2.1.1.74" evidence="1"/>
<dbReference type="EMBL" id="AE017285">
    <property type="protein sequence ID" value="AAS96823.1"/>
    <property type="molecule type" value="Genomic_DNA"/>
</dbReference>
<dbReference type="RefSeq" id="YP_011563.1">
    <property type="nucleotide sequence ID" value="NC_002937.3"/>
</dbReference>
<dbReference type="SMR" id="Q729K0"/>
<dbReference type="IntAct" id="Q729K0">
    <property type="interactions" value="1"/>
</dbReference>
<dbReference type="STRING" id="882.DVU_2350"/>
<dbReference type="PaxDb" id="882-DVU_2350"/>
<dbReference type="EnsemblBacteria" id="AAS96823">
    <property type="protein sequence ID" value="AAS96823"/>
    <property type="gene ID" value="DVU_2350"/>
</dbReference>
<dbReference type="KEGG" id="dvu:DVU_2350"/>
<dbReference type="PATRIC" id="fig|882.5.peg.2127"/>
<dbReference type="eggNOG" id="COG1206">
    <property type="taxonomic scope" value="Bacteria"/>
</dbReference>
<dbReference type="HOGENOM" id="CLU_033057_1_0_7"/>
<dbReference type="OrthoDB" id="9803114at2"/>
<dbReference type="PhylomeDB" id="Q729K0"/>
<dbReference type="Proteomes" id="UP000002194">
    <property type="component" value="Chromosome"/>
</dbReference>
<dbReference type="GO" id="GO:0005829">
    <property type="term" value="C:cytosol"/>
    <property type="evidence" value="ECO:0007669"/>
    <property type="project" value="TreeGrafter"/>
</dbReference>
<dbReference type="GO" id="GO:0050660">
    <property type="term" value="F:flavin adenine dinucleotide binding"/>
    <property type="evidence" value="ECO:0007669"/>
    <property type="project" value="UniProtKB-UniRule"/>
</dbReference>
<dbReference type="GO" id="GO:0047151">
    <property type="term" value="F:tRNA (uracil(54)-C5)-methyltransferase activity, 5,10-methylenetetrahydrofolate-dependent"/>
    <property type="evidence" value="ECO:0007669"/>
    <property type="project" value="UniProtKB-UniRule"/>
</dbReference>
<dbReference type="GO" id="GO:0030488">
    <property type="term" value="P:tRNA methylation"/>
    <property type="evidence" value="ECO:0007669"/>
    <property type="project" value="TreeGrafter"/>
</dbReference>
<dbReference type="GO" id="GO:0002098">
    <property type="term" value="P:tRNA wobble uridine modification"/>
    <property type="evidence" value="ECO:0007669"/>
    <property type="project" value="TreeGrafter"/>
</dbReference>
<dbReference type="Gene3D" id="3.50.50.60">
    <property type="entry name" value="FAD/NAD(P)-binding domain"/>
    <property type="match status" value="2"/>
</dbReference>
<dbReference type="HAMAP" id="MF_01037">
    <property type="entry name" value="TrmFO"/>
    <property type="match status" value="1"/>
</dbReference>
<dbReference type="InterPro" id="IPR036188">
    <property type="entry name" value="FAD/NAD-bd_sf"/>
</dbReference>
<dbReference type="InterPro" id="IPR002218">
    <property type="entry name" value="MnmG-rel"/>
</dbReference>
<dbReference type="InterPro" id="IPR040131">
    <property type="entry name" value="MnmG_N"/>
</dbReference>
<dbReference type="InterPro" id="IPR004417">
    <property type="entry name" value="TrmFO"/>
</dbReference>
<dbReference type="NCBIfam" id="TIGR00137">
    <property type="entry name" value="gid_trmFO"/>
    <property type="match status" value="1"/>
</dbReference>
<dbReference type="NCBIfam" id="NF003739">
    <property type="entry name" value="PRK05335.1"/>
    <property type="match status" value="1"/>
</dbReference>
<dbReference type="PANTHER" id="PTHR11806">
    <property type="entry name" value="GLUCOSE INHIBITED DIVISION PROTEIN A"/>
    <property type="match status" value="1"/>
</dbReference>
<dbReference type="PANTHER" id="PTHR11806:SF2">
    <property type="entry name" value="METHYLENETETRAHYDROFOLATE--TRNA-(URACIL-5-)-METHYLTRANSFERASE TRMFO"/>
    <property type="match status" value="1"/>
</dbReference>
<dbReference type="Pfam" id="PF01134">
    <property type="entry name" value="GIDA"/>
    <property type="match status" value="1"/>
</dbReference>
<dbReference type="SUPFAM" id="SSF51905">
    <property type="entry name" value="FAD/NAD(P)-binding domain"/>
    <property type="match status" value="1"/>
</dbReference>
<name>TRMFO_NITV2</name>
<organism>
    <name type="scientific">Nitratidesulfovibrio vulgaris (strain ATCC 29579 / DSM 644 / CCUG 34227 / NCIMB 8303 / VKM B-1760 / Hildenborough)</name>
    <name type="common">Desulfovibrio vulgaris</name>
    <dbReference type="NCBI Taxonomy" id="882"/>
    <lineage>
        <taxon>Bacteria</taxon>
        <taxon>Pseudomonadati</taxon>
        <taxon>Thermodesulfobacteriota</taxon>
        <taxon>Desulfovibrionia</taxon>
        <taxon>Desulfovibrionales</taxon>
        <taxon>Desulfovibrionaceae</taxon>
        <taxon>Nitratidesulfovibrio</taxon>
    </lineage>
</organism>
<reference key="1">
    <citation type="journal article" date="2004" name="Nat. Biotechnol.">
        <title>The genome sequence of the anaerobic, sulfate-reducing bacterium Desulfovibrio vulgaris Hildenborough.</title>
        <authorList>
            <person name="Heidelberg J.F."/>
            <person name="Seshadri R."/>
            <person name="Haveman S.A."/>
            <person name="Hemme C.L."/>
            <person name="Paulsen I.T."/>
            <person name="Kolonay J.F."/>
            <person name="Eisen J.A."/>
            <person name="Ward N.L."/>
            <person name="Methe B.A."/>
            <person name="Brinkac L.M."/>
            <person name="Daugherty S.C."/>
            <person name="DeBoy R.T."/>
            <person name="Dodson R.J."/>
            <person name="Durkin A.S."/>
            <person name="Madupu R."/>
            <person name="Nelson W.C."/>
            <person name="Sullivan S.A."/>
            <person name="Fouts D.E."/>
            <person name="Haft D.H."/>
            <person name="Selengut J."/>
            <person name="Peterson J.D."/>
            <person name="Davidsen T.M."/>
            <person name="Zafar N."/>
            <person name="Zhou L."/>
            <person name="Radune D."/>
            <person name="Dimitrov G."/>
            <person name="Hance M."/>
            <person name="Tran K."/>
            <person name="Khouri H.M."/>
            <person name="Gill J."/>
            <person name="Utterback T.R."/>
            <person name="Feldblyum T.V."/>
            <person name="Wall J.D."/>
            <person name="Voordouw G."/>
            <person name="Fraser C.M."/>
        </authorList>
    </citation>
    <scope>NUCLEOTIDE SEQUENCE [LARGE SCALE GENOMIC DNA]</scope>
    <source>
        <strain>ATCC 29579 / DSM 644 / CCUG 34227 / NCIMB 8303 / VKM B-1760 / Hildenborough</strain>
    </source>
</reference>
<sequence length="474" mass="50947">MEDSLTTITTAAIIGAGLAGCECALRLARAGVRVTLFEMKPAAFSPAHSNPDLGELVCSNSLRSDDIASGVGLLKQEMRELGSIVMEAADATRVPAGKALAVDRDLFARHITAVIEAEPGITLERREVASLDDPALASADVVVIAAGPLASAGLSDSLAAVVGGQLYFYDAIAPIIAAESIDLSIVFSGSRYGEPGEEGDYLNCPMNRDEYDAFYEALLAAEKVPSRDFEKELHFEGCMPIEALAERGPRTLVFGPFKPVGFTDPRTGTRPYAIIQLRAENRNKTAFNIVGCQTKLKYAEQERVFRMIPGLAGAEFVRHGSVHRNTYVNAPRVLADDLSLRADKRVFLAGQITGVEGYVESAACGMWLGMVLAARIQGRELPTPPPQTALGALLMHLRTPVKNFQPSNANFGLMPELGLKVKKRERKPLYSARAREHFVRWLAEAGVTPVIEPLLPTAPDTTGAAGEETTQAES</sequence>
<protein>
    <recommendedName>
        <fullName evidence="1">Methylenetetrahydrofolate--tRNA-(uracil-5-)-methyltransferase TrmFO</fullName>
        <ecNumber evidence="1">2.1.1.74</ecNumber>
    </recommendedName>
    <alternativeName>
        <fullName evidence="1">Folate-dependent tRNA (uracil-5-)-methyltransferase</fullName>
    </alternativeName>
    <alternativeName>
        <fullName evidence="1">Folate-dependent tRNA(M-5-U54)-methyltransferase</fullName>
    </alternativeName>
</protein>